<reference key="1">
    <citation type="journal article" date="2001" name="Proc. Natl. Acad. Sci. U.S.A.">
        <title>The complete genome of the crenarchaeon Sulfolobus solfataricus P2.</title>
        <authorList>
            <person name="She Q."/>
            <person name="Singh R.K."/>
            <person name="Confalonieri F."/>
            <person name="Zivanovic Y."/>
            <person name="Allard G."/>
            <person name="Awayez M.J."/>
            <person name="Chan-Weiher C.C.-Y."/>
            <person name="Clausen I.G."/>
            <person name="Curtis B.A."/>
            <person name="De Moors A."/>
            <person name="Erauso G."/>
            <person name="Fletcher C."/>
            <person name="Gordon P.M.K."/>
            <person name="Heikamp-de Jong I."/>
            <person name="Jeffries A.C."/>
            <person name="Kozera C.J."/>
            <person name="Medina N."/>
            <person name="Peng X."/>
            <person name="Thi-Ngoc H.P."/>
            <person name="Redder P."/>
            <person name="Schenk M.E."/>
            <person name="Theriault C."/>
            <person name="Tolstrup N."/>
            <person name="Charlebois R.L."/>
            <person name="Doolittle W.F."/>
            <person name="Duguet M."/>
            <person name="Gaasterland T."/>
            <person name="Garrett R.A."/>
            <person name="Ragan M.A."/>
            <person name="Sensen C.W."/>
            <person name="Van der Oost J."/>
        </authorList>
    </citation>
    <scope>NUCLEOTIDE SEQUENCE [LARGE SCALE GENOMIC DNA]</scope>
    <source>
        <strain>ATCC 35092 / DSM 1617 / JCM 11322 / P2</strain>
    </source>
</reference>
<comment type="function">
    <text evidence="1">eIF-2 functions in the early steps of protein synthesis by forming a ternary complex with GTP and initiator tRNA.</text>
</comment>
<comment type="subunit">
    <text evidence="1">Heterotrimer composed of an alpha, a beta and a gamma chain.</text>
</comment>
<comment type="similarity">
    <text evidence="1">Belongs to the eIF-2-beta/eIF-5 family.</text>
</comment>
<feature type="chain" id="PRO_0000137434" description="Translation initiation factor 2 subunit beta">
    <location>
        <begin position="1"/>
        <end position="139"/>
    </location>
</feature>
<feature type="helix" evidence="4">
    <location>
        <begin position="4"/>
        <end position="15"/>
    </location>
</feature>
<feature type="strand" evidence="5">
    <location>
        <begin position="21"/>
        <end position="23"/>
    </location>
</feature>
<feature type="strand" evidence="5">
    <location>
        <begin position="39"/>
        <end position="41"/>
    </location>
</feature>
<feature type="strand" evidence="3">
    <location>
        <begin position="42"/>
        <end position="44"/>
    </location>
</feature>
<feature type="strand" evidence="5">
    <location>
        <begin position="47"/>
        <end position="49"/>
    </location>
</feature>
<feature type="turn" evidence="5">
    <location>
        <begin position="50"/>
        <end position="54"/>
    </location>
</feature>
<feature type="turn" evidence="5">
    <location>
        <begin position="59"/>
        <end position="61"/>
    </location>
</feature>
<feature type="helix" evidence="5">
    <location>
        <begin position="62"/>
        <end position="65"/>
    </location>
</feature>
<feature type="strand" evidence="3">
    <location>
        <begin position="73"/>
        <end position="75"/>
    </location>
</feature>
<feature type="strand" evidence="5">
    <location>
        <begin position="76"/>
        <end position="78"/>
    </location>
</feature>
<feature type="turn" evidence="5">
    <location>
        <begin position="82"/>
        <end position="84"/>
    </location>
</feature>
<feature type="strand" evidence="2">
    <location>
        <begin position="88"/>
        <end position="90"/>
    </location>
</feature>
<feature type="turn" evidence="5">
    <location>
        <begin position="95"/>
        <end position="99"/>
    </location>
</feature>
<feature type="turn" evidence="6">
    <location>
        <begin position="101"/>
        <end position="103"/>
    </location>
</feature>
<feature type="strand" evidence="5">
    <location>
        <begin position="108"/>
        <end position="112"/>
    </location>
</feature>
<feature type="strand" evidence="3">
    <location>
        <begin position="114"/>
        <end position="116"/>
    </location>
</feature>
<feature type="turn" evidence="5">
    <location>
        <begin position="122"/>
        <end position="124"/>
    </location>
</feature>
<feature type="strand" evidence="6">
    <location>
        <begin position="125"/>
        <end position="130"/>
    </location>
</feature>
<feature type="strand" evidence="3">
    <location>
        <begin position="133"/>
        <end position="136"/>
    </location>
</feature>
<gene>
    <name evidence="1" type="primary">eif2b</name>
    <name type="synonym">aif2b</name>
    <name type="ordered locus">SSO2381</name>
</gene>
<protein>
    <recommendedName>
        <fullName evidence="1">Translation initiation factor 2 subunit beta</fullName>
    </recommendedName>
    <alternativeName>
        <fullName evidence="1">aIF2-beta</fullName>
    </alternativeName>
    <alternativeName>
        <fullName evidence="1">eIF-2-beta</fullName>
    </alternativeName>
</protein>
<dbReference type="EMBL" id="AE006641">
    <property type="protein sequence ID" value="AAK42529.1"/>
    <property type="molecule type" value="Genomic_DNA"/>
</dbReference>
<dbReference type="PIR" id="B90409">
    <property type="entry name" value="B90409"/>
</dbReference>
<dbReference type="PDB" id="2NXU">
    <property type="method" value="NMR"/>
    <property type="chains" value="A=2-139"/>
</dbReference>
<dbReference type="PDB" id="2QMU">
    <property type="method" value="X-ray"/>
    <property type="resolution" value="3.20 A"/>
    <property type="chains" value="C=2-139"/>
</dbReference>
<dbReference type="PDB" id="2QN6">
    <property type="method" value="X-ray"/>
    <property type="resolution" value="2.15 A"/>
    <property type="chains" value="C=2-19"/>
</dbReference>
<dbReference type="PDB" id="3CW2">
    <property type="method" value="X-ray"/>
    <property type="resolution" value="2.80 A"/>
    <property type="chains" value="K/L/M/N=1-139"/>
</dbReference>
<dbReference type="PDB" id="3V11">
    <property type="method" value="X-ray"/>
    <property type="resolution" value="5.00 A"/>
    <property type="chains" value="C=2-139"/>
</dbReference>
<dbReference type="PDB" id="5JB3">
    <property type="method" value="EM"/>
    <property type="resolution" value="5.34 A"/>
    <property type="chains" value="8=1-139"/>
</dbReference>
<dbReference type="PDB" id="5JBH">
    <property type="method" value="EM"/>
    <property type="resolution" value="5.34 A"/>
    <property type="chains" value="8=1-139"/>
</dbReference>
<dbReference type="PDB" id="5K0Y">
    <property type="method" value="EM"/>
    <property type="resolution" value="5.80 A"/>
    <property type="chains" value="d=3-19"/>
</dbReference>
<dbReference type="PDB" id="6SW9">
    <property type="method" value="EM"/>
    <property type="resolution" value="4.20 A"/>
    <property type="chains" value="8=3-139"/>
</dbReference>
<dbReference type="PDB" id="6SWC">
    <property type="method" value="EM"/>
    <property type="resolution" value="3.30 A"/>
    <property type="chains" value="8=1-139"/>
</dbReference>
<dbReference type="PDBsum" id="2NXU"/>
<dbReference type="PDBsum" id="2QMU"/>
<dbReference type="PDBsum" id="2QN6"/>
<dbReference type="PDBsum" id="3CW2"/>
<dbReference type="PDBsum" id="3V11"/>
<dbReference type="PDBsum" id="5JB3"/>
<dbReference type="PDBsum" id="5JBH"/>
<dbReference type="PDBsum" id="5K0Y"/>
<dbReference type="PDBsum" id="6SW9"/>
<dbReference type="PDBsum" id="6SWC"/>
<dbReference type="BMRB" id="Q97W59"/>
<dbReference type="EMDB" id="EMD-10320"/>
<dbReference type="EMDB" id="EMD-10322"/>
<dbReference type="EMDB" id="EMD-8148"/>
<dbReference type="EMDB" id="EMD-8149"/>
<dbReference type="SMR" id="Q97W59"/>
<dbReference type="DIP" id="DIP-46185N"/>
<dbReference type="FunCoup" id="Q97W59">
    <property type="interactions" value="163"/>
</dbReference>
<dbReference type="IntAct" id="Q97W59">
    <property type="interactions" value="1"/>
</dbReference>
<dbReference type="STRING" id="273057.SSO2381"/>
<dbReference type="PaxDb" id="273057-SSO2381"/>
<dbReference type="EnsemblBacteria" id="AAK42529">
    <property type="protein sequence ID" value="AAK42529"/>
    <property type="gene ID" value="SSO2381"/>
</dbReference>
<dbReference type="KEGG" id="sso:SSO2381"/>
<dbReference type="PATRIC" id="fig|273057.12.peg.2463"/>
<dbReference type="eggNOG" id="arCOG01640">
    <property type="taxonomic scope" value="Archaea"/>
</dbReference>
<dbReference type="HOGENOM" id="CLU_026663_3_1_2"/>
<dbReference type="InParanoid" id="Q97W59"/>
<dbReference type="PhylomeDB" id="Q97W59"/>
<dbReference type="BRENDA" id="3.6.5.3">
    <property type="organism ID" value="6163"/>
</dbReference>
<dbReference type="EvolutionaryTrace" id="Q97W59"/>
<dbReference type="Proteomes" id="UP000001974">
    <property type="component" value="Chromosome"/>
</dbReference>
<dbReference type="GO" id="GO:0003743">
    <property type="term" value="F:translation initiation factor activity"/>
    <property type="evidence" value="ECO:0000318"/>
    <property type="project" value="GO_Central"/>
</dbReference>
<dbReference type="DisProt" id="DP01285"/>
<dbReference type="FunFam" id="3.30.30.170:FF:000001">
    <property type="entry name" value="Eukaryotic translation initiation factor 2 subunit"/>
    <property type="match status" value="1"/>
</dbReference>
<dbReference type="Gene3D" id="3.30.30.170">
    <property type="match status" value="1"/>
</dbReference>
<dbReference type="HAMAP" id="MF_00232">
    <property type="entry name" value="eIF_2_beta"/>
    <property type="match status" value="1"/>
</dbReference>
<dbReference type="InterPro" id="IPR045196">
    <property type="entry name" value="IF2/IF5"/>
</dbReference>
<dbReference type="InterPro" id="IPR004458">
    <property type="entry name" value="TIF2_bsu_arc"/>
</dbReference>
<dbReference type="InterPro" id="IPR002735">
    <property type="entry name" value="Transl_init_fac_IF2/IF5_dom"/>
</dbReference>
<dbReference type="InterPro" id="IPR016189">
    <property type="entry name" value="Transl_init_fac_IF2/IF5_N"/>
</dbReference>
<dbReference type="InterPro" id="IPR016190">
    <property type="entry name" value="Transl_init_fac_IF2/IF5_Zn-bd"/>
</dbReference>
<dbReference type="NCBIfam" id="NF003067">
    <property type="entry name" value="PRK03988.1"/>
    <property type="match status" value="1"/>
</dbReference>
<dbReference type="PANTHER" id="PTHR23001">
    <property type="entry name" value="EUKARYOTIC TRANSLATION INITIATION FACTOR"/>
    <property type="match status" value="1"/>
</dbReference>
<dbReference type="PANTHER" id="PTHR23001:SF3">
    <property type="entry name" value="EUKARYOTIC TRANSLATION INITIATION FACTOR 2 SUBUNIT 2"/>
    <property type="match status" value="1"/>
</dbReference>
<dbReference type="Pfam" id="PF01873">
    <property type="entry name" value="eIF-5_eIF-2B"/>
    <property type="match status" value="1"/>
</dbReference>
<dbReference type="SMART" id="SM00653">
    <property type="entry name" value="eIF2B_5"/>
    <property type="match status" value="1"/>
</dbReference>
<dbReference type="SUPFAM" id="SSF100966">
    <property type="entry name" value="Translation initiation factor 2 beta, aIF2beta, N-terminal domain"/>
    <property type="match status" value="1"/>
</dbReference>
<dbReference type="SUPFAM" id="SSF75689">
    <property type="entry name" value="Zinc-binding domain of translation initiation factor 2 beta"/>
    <property type="match status" value="1"/>
</dbReference>
<organism>
    <name type="scientific">Saccharolobus solfataricus (strain ATCC 35092 / DSM 1617 / JCM 11322 / P2)</name>
    <name type="common">Sulfolobus solfataricus</name>
    <dbReference type="NCBI Taxonomy" id="273057"/>
    <lineage>
        <taxon>Archaea</taxon>
        <taxon>Thermoproteota</taxon>
        <taxon>Thermoprotei</taxon>
        <taxon>Sulfolobales</taxon>
        <taxon>Sulfolobaceae</taxon>
        <taxon>Saccharolobus</taxon>
    </lineage>
</organism>
<accession>Q97W59</accession>
<name>IF2B_SACS2</name>
<sequence>MSSEKEYVEMLDRLYSKLPEKGRKEGTQSLPNMIILNIGNTTIIRNFAEYCDRIRREDKICMKYLLKELAAPGNVDDKGELVIQGKFSSQVINTLMERFLKAYVECSTCKSLDTILKKEKKSWYIVCLACGAQTPVKPL</sequence>
<proteinExistence type="evidence at protein level"/>
<keyword id="KW-0002">3D-structure</keyword>
<keyword id="KW-0396">Initiation factor</keyword>
<keyword id="KW-0648">Protein biosynthesis</keyword>
<keyword id="KW-1185">Reference proteome</keyword>
<evidence type="ECO:0000255" key="1">
    <source>
        <dbReference type="HAMAP-Rule" id="MF_00232"/>
    </source>
</evidence>
<evidence type="ECO:0007829" key="2">
    <source>
        <dbReference type="PDB" id="2NXU"/>
    </source>
</evidence>
<evidence type="ECO:0007829" key="3">
    <source>
        <dbReference type="PDB" id="2QMU"/>
    </source>
</evidence>
<evidence type="ECO:0007829" key="4">
    <source>
        <dbReference type="PDB" id="2QN6"/>
    </source>
</evidence>
<evidence type="ECO:0007829" key="5">
    <source>
        <dbReference type="PDB" id="3CW2"/>
    </source>
</evidence>
<evidence type="ECO:0007829" key="6">
    <source>
        <dbReference type="PDB" id="6SWC"/>
    </source>
</evidence>